<name>SUCC_BURM9</name>
<reference key="1">
    <citation type="journal article" date="2010" name="Genome Biol. Evol.">
        <title>Continuing evolution of Burkholderia mallei through genome reduction and large-scale rearrangements.</title>
        <authorList>
            <person name="Losada L."/>
            <person name="Ronning C.M."/>
            <person name="DeShazer D."/>
            <person name="Woods D."/>
            <person name="Fedorova N."/>
            <person name="Kim H.S."/>
            <person name="Shabalina S.A."/>
            <person name="Pearson T.R."/>
            <person name="Brinkac L."/>
            <person name="Tan P."/>
            <person name="Nandi T."/>
            <person name="Crabtree J."/>
            <person name="Badger J."/>
            <person name="Beckstrom-Sternberg S."/>
            <person name="Saqib M."/>
            <person name="Schutzer S.E."/>
            <person name="Keim P."/>
            <person name="Nierman W.C."/>
        </authorList>
    </citation>
    <scope>NUCLEOTIDE SEQUENCE [LARGE SCALE GENOMIC DNA]</scope>
    <source>
        <strain>NCTC 10229</strain>
    </source>
</reference>
<comment type="function">
    <text evidence="1">Succinyl-CoA synthetase functions in the citric acid cycle (TCA), coupling the hydrolysis of succinyl-CoA to the synthesis of either ATP or GTP and thus represents the only step of substrate-level phosphorylation in the TCA. The beta subunit provides nucleotide specificity of the enzyme and binds the substrate succinate, while the binding sites for coenzyme A and phosphate are found in the alpha subunit.</text>
</comment>
<comment type="catalytic activity">
    <reaction evidence="1">
        <text>succinate + ATP + CoA = succinyl-CoA + ADP + phosphate</text>
        <dbReference type="Rhea" id="RHEA:17661"/>
        <dbReference type="ChEBI" id="CHEBI:30031"/>
        <dbReference type="ChEBI" id="CHEBI:30616"/>
        <dbReference type="ChEBI" id="CHEBI:43474"/>
        <dbReference type="ChEBI" id="CHEBI:57287"/>
        <dbReference type="ChEBI" id="CHEBI:57292"/>
        <dbReference type="ChEBI" id="CHEBI:456216"/>
        <dbReference type="EC" id="6.2.1.5"/>
    </reaction>
    <physiologicalReaction direction="right-to-left" evidence="1">
        <dbReference type="Rhea" id="RHEA:17663"/>
    </physiologicalReaction>
</comment>
<comment type="catalytic activity">
    <reaction evidence="1">
        <text>GTP + succinate + CoA = succinyl-CoA + GDP + phosphate</text>
        <dbReference type="Rhea" id="RHEA:22120"/>
        <dbReference type="ChEBI" id="CHEBI:30031"/>
        <dbReference type="ChEBI" id="CHEBI:37565"/>
        <dbReference type="ChEBI" id="CHEBI:43474"/>
        <dbReference type="ChEBI" id="CHEBI:57287"/>
        <dbReference type="ChEBI" id="CHEBI:57292"/>
        <dbReference type="ChEBI" id="CHEBI:58189"/>
    </reaction>
    <physiologicalReaction direction="right-to-left" evidence="1">
        <dbReference type="Rhea" id="RHEA:22122"/>
    </physiologicalReaction>
</comment>
<comment type="cofactor">
    <cofactor evidence="1">
        <name>Mg(2+)</name>
        <dbReference type="ChEBI" id="CHEBI:18420"/>
    </cofactor>
    <text evidence="1">Binds 1 Mg(2+) ion per subunit.</text>
</comment>
<comment type="pathway">
    <text evidence="1">Carbohydrate metabolism; tricarboxylic acid cycle; succinate from succinyl-CoA (ligase route): step 1/1.</text>
</comment>
<comment type="subunit">
    <text evidence="1">Heterotetramer of two alpha and two beta subunits.</text>
</comment>
<comment type="similarity">
    <text evidence="1">Belongs to the succinate/malate CoA ligase beta subunit family.</text>
</comment>
<gene>
    <name evidence="1" type="primary">sucC</name>
    <name type="ordered locus">BMA10229_A2401</name>
</gene>
<sequence length="388" mass="41286">MKIHEYQGKEILRKFGVAVPRGKPAFSVDEAVKVAQELGGPVWVVKAQIHAGGRGKGGGVKVAKSLEQVREYSNQILGMQLKTHQTGPEGQKVNRLLIEEGADIKKELYVGIVIDRVSQKVVVMASSEGGMDIEEVAEKTPEAIHKVAVEPSVGLQDAEADDLAKKIGVPDASIPQAREILKGLYKSFWETDASLAEINPLVLTGDGKVIALDAKFNFDSNALFRHPEIVAYRDLDEEDPAEIEASKFDLAYISLDGNIGCLVNGAGLAMATMDTIKLFGGEPANFLDVGGGATTEKVTEAFKLMLKNPGLKAILVNIFGGIMRCDVIAEGVIAGSKAVNLNVPLVVRMKGTNEDLGKKMLAESGLPIISADSMEEAAQKVVAAAAGK</sequence>
<organism>
    <name type="scientific">Burkholderia mallei (strain NCTC 10229)</name>
    <dbReference type="NCBI Taxonomy" id="412022"/>
    <lineage>
        <taxon>Bacteria</taxon>
        <taxon>Pseudomonadati</taxon>
        <taxon>Pseudomonadota</taxon>
        <taxon>Betaproteobacteria</taxon>
        <taxon>Burkholderiales</taxon>
        <taxon>Burkholderiaceae</taxon>
        <taxon>Burkholderia</taxon>
        <taxon>pseudomallei group</taxon>
    </lineage>
</organism>
<feature type="chain" id="PRO_1000082039" description="Succinate--CoA ligase [ADP-forming] subunit beta">
    <location>
        <begin position="1"/>
        <end position="388"/>
    </location>
</feature>
<feature type="domain" description="ATP-grasp" evidence="1">
    <location>
        <begin position="9"/>
        <end position="244"/>
    </location>
</feature>
<feature type="binding site" evidence="1">
    <location>
        <position position="46"/>
    </location>
    <ligand>
        <name>ATP</name>
        <dbReference type="ChEBI" id="CHEBI:30616"/>
    </ligand>
</feature>
<feature type="binding site" evidence="1">
    <location>
        <begin position="53"/>
        <end position="55"/>
    </location>
    <ligand>
        <name>ATP</name>
        <dbReference type="ChEBI" id="CHEBI:30616"/>
    </ligand>
</feature>
<feature type="binding site" evidence="1">
    <location>
        <position position="99"/>
    </location>
    <ligand>
        <name>ATP</name>
        <dbReference type="ChEBI" id="CHEBI:30616"/>
    </ligand>
</feature>
<feature type="binding site" evidence="1">
    <location>
        <position position="102"/>
    </location>
    <ligand>
        <name>ATP</name>
        <dbReference type="ChEBI" id="CHEBI:30616"/>
    </ligand>
</feature>
<feature type="binding site" evidence="1">
    <location>
        <position position="107"/>
    </location>
    <ligand>
        <name>ATP</name>
        <dbReference type="ChEBI" id="CHEBI:30616"/>
    </ligand>
</feature>
<feature type="binding site" evidence="1">
    <location>
        <position position="199"/>
    </location>
    <ligand>
        <name>Mg(2+)</name>
        <dbReference type="ChEBI" id="CHEBI:18420"/>
    </ligand>
</feature>
<feature type="binding site" evidence="1">
    <location>
        <position position="213"/>
    </location>
    <ligand>
        <name>Mg(2+)</name>
        <dbReference type="ChEBI" id="CHEBI:18420"/>
    </ligand>
</feature>
<feature type="binding site" evidence="1">
    <location>
        <position position="264"/>
    </location>
    <ligand>
        <name>substrate</name>
        <note>ligand shared with subunit alpha</note>
    </ligand>
</feature>
<feature type="binding site" evidence="1">
    <location>
        <begin position="321"/>
        <end position="323"/>
    </location>
    <ligand>
        <name>substrate</name>
        <note>ligand shared with subunit alpha</note>
    </ligand>
</feature>
<accession>A2S8U3</accession>
<evidence type="ECO:0000255" key="1">
    <source>
        <dbReference type="HAMAP-Rule" id="MF_00558"/>
    </source>
</evidence>
<dbReference type="EC" id="6.2.1.5" evidence="1"/>
<dbReference type="EMBL" id="CP000546">
    <property type="protein sequence ID" value="ABN02132.1"/>
    <property type="molecule type" value="Genomic_DNA"/>
</dbReference>
<dbReference type="RefSeq" id="WP_004189251.1">
    <property type="nucleotide sequence ID" value="NC_008836.1"/>
</dbReference>
<dbReference type="SMR" id="A2S8U3"/>
<dbReference type="GeneID" id="92978047"/>
<dbReference type="KEGG" id="bml:BMA10229_A2401"/>
<dbReference type="HOGENOM" id="CLU_037430_0_2_4"/>
<dbReference type="UniPathway" id="UPA00223">
    <property type="reaction ID" value="UER00999"/>
</dbReference>
<dbReference type="Proteomes" id="UP000002283">
    <property type="component" value="Chromosome I"/>
</dbReference>
<dbReference type="GO" id="GO:0005829">
    <property type="term" value="C:cytosol"/>
    <property type="evidence" value="ECO:0007669"/>
    <property type="project" value="TreeGrafter"/>
</dbReference>
<dbReference type="GO" id="GO:0042709">
    <property type="term" value="C:succinate-CoA ligase complex"/>
    <property type="evidence" value="ECO:0007669"/>
    <property type="project" value="TreeGrafter"/>
</dbReference>
<dbReference type="GO" id="GO:0005524">
    <property type="term" value="F:ATP binding"/>
    <property type="evidence" value="ECO:0007669"/>
    <property type="project" value="UniProtKB-UniRule"/>
</dbReference>
<dbReference type="GO" id="GO:0000287">
    <property type="term" value="F:magnesium ion binding"/>
    <property type="evidence" value="ECO:0007669"/>
    <property type="project" value="UniProtKB-UniRule"/>
</dbReference>
<dbReference type="GO" id="GO:0004775">
    <property type="term" value="F:succinate-CoA ligase (ADP-forming) activity"/>
    <property type="evidence" value="ECO:0007669"/>
    <property type="project" value="UniProtKB-UniRule"/>
</dbReference>
<dbReference type="GO" id="GO:0004776">
    <property type="term" value="F:succinate-CoA ligase (GDP-forming) activity"/>
    <property type="evidence" value="ECO:0007669"/>
    <property type="project" value="RHEA"/>
</dbReference>
<dbReference type="GO" id="GO:0006104">
    <property type="term" value="P:succinyl-CoA metabolic process"/>
    <property type="evidence" value="ECO:0007669"/>
    <property type="project" value="TreeGrafter"/>
</dbReference>
<dbReference type="GO" id="GO:0006099">
    <property type="term" value="P:tricarboxylic acid cycle"/>
    <property type="evidence" value="ECO:0007669"/>
    <property type="project" value="UniProtKB-UniRule"/>
</dbReference>
<dbReference type="FunFam" id="3.30.1490.20:FF:000002">
    <property type="entry name" value="Succinate--CoA ligase [ADP-forming] subunit beta"/>
    <property type="match status" value="1"/>
</dbReference>
<dbReference type="FunFam" id="3.30.470.20:FF:000002">
    <property type="entry name" value="Succinate--CoA ligase [ADP-forming] subunit beta"/>
    <property type="match status" value="1"/>
</dbReference>
<dbReference type="FunFam" id="3.40.50.261:FF:000001">
    <property type="entry name" value="Succinate--CoA ligase [ADP-forming] subunit beta"/>
    <property type="match status" value="1"/>
</dbReference>
<dbReference type="Gene3D" id="3.30.1490.20">
    <property type="entry name" value="ATP-grasp fold, A domain"/>
    <property type="match status" value="1"/>
</dbReference>
<dbReference type="Gene3D" id="3.30.470.20">
    <property type="entry name" value="ATP-grasp fold, B domain"/>
    <property type="match status" value="1"/>
</dbReference>
<dbReference type="Gene3D" id="3.40.50.261">
    <property type="entry name" value="Succinyl-CoA synthetase domains"/>
    <property type="match status" value="1"/>
</dbReference>
<dbReference type="HAMAP" id="MF_00558">
    <property type="entry name" value="Succ_CoA_beta"/>
    <property type="match status" value="1"/>
</dbReference>
<dbReference type="InterPro" id="IPR011761">
    <property type="entry name" value="ATP-grasp"/>
</dbReference>
<dbReference type="InterPro" id="IPR013650">
    <property type="entry name" value="ATP-grasp_succ-CoA_synth-type"/>
</dbReference>
<dbReference type="InterPro" id="IPR013815">
    <property type="entry name" value="ATP_grasp_subdomain_1"/>
</dbReference>
<dbReference type="InterPro" id="IPR017866">
    <property type="entry name" value="Succ-CoA_synthase_bsu_CS"/>
</dbReference>
<dbReference type="InterPro" id="IPR005811">
    <property type="entry name" value="SUCC_ACL_C"/>
</dbReference>
<dbReference type="InterPro" id="IPR005809">
    <property type="entry name" value="Succ_CoA_ligase-like_bsu"/>
</dbReference>
<dbReference type="InterPro" id="IPR016102">
    <property type="entry name" value="Succinyl-CoA_synth-like"/>
</dbReference>
<dbReference type="NCBIfam" id="NF001913">
    <property type="entry name" value="PRK00696.1"/>
    <property type="match status" value="1"/>
</dbReference>
<dbReference type="NCBIfam" id="TIGR01016">
    <property type="entry name" value="sucCoAbeta"/>
    <property type="match status" value="1"/>
</dbReference>
<dbReference type="PANTHER" id="PTHR11815:SF10">
    <property type="entry name" value="SUCCINATE--COA LIGASE [GDP-FORMING] SUBUNIT BETA, MITOCHONDRIAL"/>
    <property type="match status" value="1"/>
</dbReference>
<dbReference type="PANTHER" id="PTHR11815">
    <property type="entry name" value="SUCCINYL-COA SYNTHETASE BETA CHAIN"/>
    <property type="match status" value="1"/>
</dbReference>
<dbReference type="Pfam" id="PF08442">
    <property type="entry name" value="ATP-grasp_2"/>
    <property type="match status" value="1"/>
</dbReference>
<dbReference type="Pfam" id="PF00549">
    <property type="entry name" value="Ligase_CoA"/>
    <property type="match status" value="1"/>
</dbReference>
<dbReference type="PIRSF" id="PIRSF001554">
    <property type="entry name" value="SucCS_beta"/>
    <property type="match status" value="1"/>
</dbReference>
<dbReference type="SUPFAM" id="SSF56059">
    <property type="entry name" value="Glutathione synthetase ATP-binding domain-like"/>
    <property type="match status" value="1"/>
</dbReference>
<dbReference type="SUPFAM" id="SSF52210">
    <property type="entry name" value="Succinyl-CoA synthetase domains"/>
    <property type="match status" value="1"/>
</dbReference>
<dbReference type="PROSITE" id="PS50975">
    <property type="entry name" value="ATP_GRASP"/>
    <property type="match status" value="1"/>
</dbReference>
<dbReference type="PROSITE" id="PS01217">
    <property type="entry name" value="SUCCINYL_COA_LIG_3"/>
    <property type="match status" value="1"/>
</dbReference>
<proteinExistence type="inferred from homology"/>
<keyword id="KW-0067">ATP-binding</keyword>
<keyword id="KW-0436">Ligase</keyword>
<keyword id="KW-0460">Magnesium</keyword>
<keyword id="KW-0479">Metal-binding</keyword>
<keyword id="KW-0547">Nucleotide-binding</keyword>
<keyword id="KW-0816">Tricarboxylic acid cycle</keyword>
<protein>
    <recommendedName>
        <fullName evidence="1">Succinate--CoA ligase [ADP-forming] subunit beta</fullName>
        <ecNumber evidence="1">6.2.1.5</ecNumber>
    </recommendedName>
    <alternativeName>
        <fullName evidence="1">Succinyl-CoA synthetase subunit beta</fullName>
        <shortName evidence="1">SCS-beta</shortName>
    </alternativeName>
</protein>